<protein>
    <recommendedName>
        <fullName evidence="1">Nucleotide-binding protein TT_C1664</fullName>
    </recommendedName>
</protein>
<proteinExistence type="inferred from homology"/>
<comment type="function">
    <text evidence="1">Displays ATPase and GTPase activities.</text>
</comment>
<comment type="similarity">
    <text evidence="1">Belongs to the RapZ-like family.</text>
</comment>
<evidence type="ECO:0000255" key="1">
    <source>
        <dbReference type="HAMAP-Rule" id="MF_00636"/>
    </source>
</evidence>
<reference key="1">
    <citation type="journal article" date="2004" name="Nat. Biotechnol.">
        <title>The genome sequence of the extreme thermophile Thermus thermophilus.</title>
        <authorList>
            <person name="Henne A."/>
            <person name="Brueggemann H."/>
            <person name="Raasch C."/>
            <person name="Wiezer A."/>
            <person name="Hartsch T."/>
            <person name="Liesegang H."/>
            <person name="Johann A."/>
            <person name="Lienard T."/>
            <person name="Gohl O."/>
            <person name="Martinez-Arias R."/>
            <person name="Jacobi C."/>
            <person name="Starkuviene V."/>
            <person name="Schlenczeck S."/>
            <person name="Dencker S."/>
            <person name="Huber R."/>
            <person name="Klenk H.-P."/>
            <person name="Kramer W."/>
            <person name="Merkl R."/>
            <person name="Gottschalk G."/>
            <person name="Fritz H.-J."/>
        </authorList>
    </citation>
    <scope>NUCLEOTIDE SEQUENCE [LARGE SCALE GENOMIC DNA]</scope>
    <source>
        <strain>ATCC BAA-163 / DSM 7039 / HB27</strain>
    </source>
</reference>
<feature type="chain" id="PRO_0000107780" description="Nucleotide-binding protein TT_C1664">
    <location>
        <begin position="1"/>
        <end position="273"/>
    </location>
</feature>
<feature type="binding site" evidence="1">
    <location>
        <begin position="8"/>
        <end position="15"/>
    </location>
    <ligand>
        <name>ATP</name>
        <dbReference type="ChEBI" id="CHEBI:30616"/>
    </ligand>
</feature>
<feature type="binding site" evidence="1">
    <location>
        <begin position="57"/>
        <end position="60"/>
    </location>
    <ligand>
        <name>GTP</name>
        <dbReference type="ChEBI" id="CHEBI:37565"/>
    </ligand>
</feature>
<organism>
    <name type="scientific">Thermus thermophilus (strain ATCC BAA-163 / DSM 7039 / HB27)</name>
    <dbReference type="NCBI Taxonomy" id="262724"/>
    <lineage>
        <taxon>Bacteria</taxon>
        <taxon>Thermotogati</taxon>
        <taxon>Deinococcota</taxon>
        <taxon>Deinococci</taxon>
        <taxon>Thermales</taxon>
        <taxon>Thermaceae</taxon>
        <taxon>Thermus</taxon>
    </lineage>
</organism>
<sequence length="273" mass="30146">MRFLVLTGLSGAGKTTARGFLEDLGYFMVDNLPPRLWPPLLQEAAARGLARVGVVVDARALAFFQDLEEVLEALRPTVVYLEARPEVLLRRYNLTRRVHPLGAGNLMREIAEERRALAGLRGRAHLVVDTSELSPRGLKEALARFLGEEGGFLLRLVSFGFKWGPPQEADLVLDVRPLPNPHYDPALRPRTGLDPEVRRYVFSEAAEPYYRALLAVAGLAAEGARAEGRAFYTVAVGCTGGRHRSVAVAERLAEELSGRFAVEVVHRDVEREG</sequence>
<gene>
    <name type="ordered locus">TT_C1664</name>
</gene>
<name>Y1664_THET2</name>
<dbReference type="EMBL" id="AE017221">
    <property type="protein sequence ID" value="AAS82006.1"/>
    <property type="molecule type" value="Genomic_DNA"/>
</dbReference>
<dbReference type="RefSeq" id="WP_011174030.1">
    <property type="nucleotide sequence ID" value="NC_005835.1"/>
</dbReference>
<dbReference type="SMR" id="Q72H31"/>
<dbReference type="KEGG" id="tth:TT_C1664"/>
<dbReference type="eggNOG" id="COG1660">
    <property type="taxonomic scope" value="Bacteria"/>
</dbReference>
<dbReference type="HOGENOM" id="CLU_059558_0_0_0"/>
<dbReference type="OrthoDB" id="9784461at2"/>
<dbReference type="Proteomes" id="UP000000592">
    <property type="component" value="Chromosome"/>
</dbReference>
<dbReference type="GO" id="GO:0005524">
    <property type="term" value="F:ATP binding"/>
    <property type="evidence" value="ECO:0007669"/>
    <property type="project" value="UniProtKB-UniRule"/>
</dbReference>
<dbReference type="GO" id="GO:0005525">
    <property type="term" value="F:GTP binding"/>
    <property type="evidence" value="ECO:0007669"/>
    <property type="project" value="UniProtKB-UniRule"/>
</dbReference>
<dbReference type="Gene3D" id="3.40.50.300">
    <property type="entry name" value="P-loop containing nucleotide triphosphate hydrolases"/>
    <property type="match status" value="1"/>
</dbReference>
<dbReference type="HAMAP" id="MF_00636">
    <property type="entry name" value="RapZ_like"/>
    <property type="match status" value="1"/>
</dbReference>
<dbReference type="InterPro" id="IPR027417">
    <property type="entry name" value="P-loop_NTPase"/>
</dbReference>
<dbReference type="InterPro" id="IPR005337">
    <property type="entry name" value="RapZ-like"/>
</dbReference>
<dbReference type="InterPro" id="IPR053930">
    <property type="entry name" value="RapZ-like_N"/>
</dbReference>
<dbReference type="InterPro" id="IPR053931">
    <property type="entry name" value="RapZ_C"/>
</dbReference>
<dbReference type="NCBIfam" id="NF003828">
    <property type="entry name" value="PRK05416.1"/>
    <property type="match status" value="1"/>
</dbReference>
<dbReference type="PANTHER" id="PTHR30448">
    <property type="entry name" value="RNASE ADAPTER PROTEIN RAPZ"/>
    <property type="match status" value="1"/>
</dbReference>
<dbReference type="PANTHER" id="PTHR30448:SF0">
    <property type="entry name" value="RNASE ADAPTER PROTEIN RAPZ"/>
    <property type="match status" value="1"/>
</dbReference>
<dbReference type="Pfam" id="PF22740">
    <property type="entry name" value="PapZ_C"/>
    <property type="match status" value="1"/>
</dbReference>
<dbReference type="Pfam" id="PF03668">
    <property type="entry name" value="RapZ-like_N"/>
    <property type="match status" value="1"/>
</dbReference>
<dbReference type="PIRSF" id="PIRSF005052">
    <property type="entry name" value="P-loopkin"/>
    <property type="match status" value="1"/>
</dbReference>
<dbReference type="SUPFAM" id="SSF52540">
    <property type="entry name" value="P-loop containing nucleoside triphosphate hydrolases"/>
    <property type="match status" value="1"/>
</dbReference>
<keyword id="KW-0067">ATP-binding</keyword>
<keyword id="KW-0342">GTP-binding</keyword>
<keyword id="KW-0547">Nucleotide-binding</keyword>
<accession>Q72H31</accession>